<accession>Q87UQ5</accession>
<organism>
    <name type="scientific">Pseudomonas syringae pv. tomato (strain ATCC BAA-871 / DC3000)</name>
    <dbReference type="NCBI Taxonomy" id="223283"/>
    <lineage>
        <taxon>Bacteria</taxon>
        <taxon>Pseudomonadati</taxon>
        <taxon>Pseudomonadota</taxon>
        <taxon>Gammaproteobacteria</taxon>
        <taxon>Pseudomonadales</taxon>
        <taxon>Pseudomonadaceae</taxon>
        <taxon>Pseudomonas</taxon>
    </lineage>
</organism>
<feature type="chain" id="PRO_0000267685" description="3-octaprenyl-4-hydroxybenzoate carboxy-lyase">
    <location>
        <begin position="1"/>
        <end position="488"/>
    </location>
</feature>
<feature type="active site" description="Proton donor" evidence="1">
    <location>
        <position position="287"/>
    </location>
</feature>
<feature type="binding site" evidence="1">
    <location>
        <position position="172"/>
    </location>
    <ligand>
        <name>Mn(2+)</name>
        <dbReference type="ChEBI" id="CHEBI:29035"/>
    </ligand>
</feature>
<feature type="binding site" evidence="1">
    <location>
        <begin position="175"/>
        <end position="177"/>
    </location>
    <ligand>
        <name>prenylated FMN</name>
        <dbReference type="ChEBI" id="CHEBI:87746"/>
    </ligand>
</feature>
<feature type="binding site" evidence="1">
    <location>
        <begin position="189"/>
        <end position="191"/>
    </location>
    <ligand>
        <name>prenylated FMN</name>
        <dbReference type="ChEBI" id="CHEBI:87746"/>
    </ligand>
</feature>
<feature type="binding site" evidence="1">
    <location>
        <begin position="194"/>
        <end position="195"/>
    </location>
    <ligand>
        <name>prenylated FMN</name>
        <dbReference type="ChEBI" id="CHEBI:87746"/>
    </ligand>
</feature>
<feature type="binding site" evidence="1">
    <location>
        <position position="238"/>
    </location>
    <ligand>
        <name>Mn(2+)</name>
        <dbReference type="ChEBI" id="CHEBI:29035"/>
    </ligand>
</feature>
<proteinExistence type="inferred from homology"/>
<sequence>MKFKDLRDFVQQLEQRGELKRIQMPISPVLEMTEICDRTLRAKGPALLFENPVGFDIPVLGNLFGTPERVAMGMGAEAVTELREIGKLLAFLKEPEPPKGLKDAWSKLPIFRKVIAMAPKVVKDAPCQEIVIEGDDVDLGMLPVQTCWPGDVAPLITWGLTVTKGPNKERQNLGIYRQQVIGRNKIIMRWLSHRGGALDFRDWCVKHPGEPYPVAVALGADPATILGAVTPVPDSLSEYAFAGLLRGSRTELIKCRGSNLQVPASAEIVLEGVIHPGEMANEGPYGDHTGYYNEVDSFPVLTVERITHRIKPIYHSTYTGRPPDEPAILGVALNEVFVPILQKQFPEIVDFYLPPEGCSYRMAVVTIKKQYPGHAKRVMLGVWSFLRQFMYTKFVIVTDDDINARDWNDVIWAITTRMDPKRDTVMIDNTPIDYLDFASPVSGLGSKMGLDATNKWPGETTREWGRAIVKDEATTRRVDEIWTQLGID</sequence>
<comment type="function">
    <text evidence="1">Catalyzes the decarboxylation of 3-octaprenyl-4-hydroxy benzoate to 2-octaprenylphenol, an intermediate step in ubiquinone biosynthesis.</text>
</comment>
<comment type="catalytic activity">
    <reaction evidence="1">
        <text>a 4-hydroxy-3-(all-trans-polyprenyl)benzoate + H(+) = a 2-(all-trans-polyprenyl)phenol + CO2</text>
        <dbReference type="Rhea" id="RHEA:41680"/>
        <dbReference type="Rhea" id="RHEA-COMP:9514"/>
        <dbReference type="Rhea" id="RHEA-COMP:9516"/>
        <dbReference type="ChEBI" id="CHEBI:1269"/>
        <dbReference type="ChEBI" id="CHEBI:15378"/>
        <dbReference type="ChEBI" id="CHEBI:16526"/>
        <dbReference type="ChEBI" id="CHEBI:78396"/>
        <dbReference type="EC" id="4.1.1.98"/>
    </reaction>
</comment>
<comment type="cofactor">
    <cofactor evidence="1">
        <name>prenylated FMN</name>
        <dbReference type="ChEBI" id="CHEBI:87746"/>
    </cofactor>
    <text evidence="1">Binds 1 prenylated FMN per subunit.</text>
</comment>
<comment type="cofactor">
    <cofactor evidence="1">
        <name>Mn(2+)</name>
        <dbReference type="ChEBI" id="CHEBI:29035"/>
    </cofactor>
</comment>
<comment type="pathway">
    <text evidence="1">Cofactor biosynthesis; ubiquinone biosynthesis.</text>
</comment>
<comment type="subunit">
    <text evidence="1">Homohexamer.</text>
</comment>
<comment type="subcellular location">
    <subcellularLocation>
        <location evidence="1">Cell membrane</location>
        <topology evidence="1">Peripheral membrane protein</topology>
    </subcellularLocation>
</comment>
<comment type="similarity">
    <text evidence="1">Belongs to the UbiD family.</text>
</comment>
<gene>
    <name evidence="1" type="primary">ubiD</name>
    <name type="ordered locus">PSPTO_5241</name>
</gene>
<protein>
    <recommendedName>
        <fullName evidence="1">3-octaprenyl-4-hydroxybenzoate carboxy-lyase</fullName>
        <ecNumber evidence="1">4.1.1.98</ecNumber>
    </recommendedName>
    <alternativeName>
        <fullName evidence="1">Polyprenyl p-hydroxybenzoate decarboxylase</fullName>
    </alternativeName>
</protein>
<name>UBID_PSESM</name>
<evidence type="ECO:0000255" key="1">
    <source>
        <dbReference type="HAMAP-Rule" id="MF_01636"/>
    </source>
</evidence>
<keyword id="KW-1003">Cell membrane</keyword>
<keyword id="KW-0210">Decarboxylase</keyword>
<keyword id="KW-0285">Flavoprotein</keyword>
<keyword id="KW-0288">FMN</keyword>
<keyword id="KW-0456">Lyase</keyword>
<keyword id="KW-0464">Manganese</keyword>
<keyword id="KW-0472">Membrane</keyword>
<keyword id="KW-0479">Metal-binding</keyword>
<keyword id="KW-1185">Reference proteome</keyword>
<keyword id="KW-0831">Ubiquinone biosynthesis</keyword>
<reference key="1">
    <citation type="journal article" date="2003" name="Proc. Natl. Acad. Sci. U.S.A.">
        <title>The complete genome sequence of the Arabidopsis and tomato pathogen Pseudomonas syringae pv. tomato DC3000.</title>
        <authorList>
            <person name="Buell C.R."/>
            <person name="Joardar V."/>
            <person name="Lindeberg M."/>
            <person name="Selengut J."/>
            <person name="Paulsen I.T."/>
            <person name="Gwinn M.L."/>
            <person name="Dodson R.J."/>
            <person name="DeBoy R.T."/>
            <person name="Durkin A.S."/>
            <person name="Kolonay J.F."/>
            <person name="Madupu R."/>
            <person name="Daugherty S.C."/>
            <person name="Brinkac L.M."/>
            <person name="Beanan M.J."/>
            <person name="Haft D.H."/>
            <person name="Nelson W.C."/>
            <person name="Davidsen T.M."/>
            <person name="Zafar N."/>
            <person name="Zhou L."/>
            <person name="Liu J."/>
            <person name="Yuan Q."/>
            <person name="Khouri H.M."/>
            <person name="Fedorova N.B."/>
            <person name="Tran B."/>
            <person name="Russell D."/>
            <person name="Berry K.J."/>
            <person name="Utterback T.R."/>
            <person name="Van Aken S.E."/>
            <person name="Feldblyum T.V."/>
            <person name="D'Ascenzo M."/>
            <person name="Deng W.-L."/>
            <person name="Ramos A.R."/>
            <person name="Alfano J.R."/>
            <person name="Cartinhour S."/>
            <person name="Chatterjee A.K."/>
            <person name="Delaney T.P."/>
            <person name="Lazarowitz S.G."/>
            <person name="Martin G.B."/>
            <person name="Schneider D.J."/>
            <person name="Tang X."/>
            <person name="Bender C.L."/>
            <person name="White O."/>
            <person name="Fraser C.M."/>
            <person name="Collmer A."/>
        </authorList>
    </citation>
    <scope>NUCLEOTIDE SEQUENCE [LARGE SCALE GENOMIC DNA]</scope>
    <source>
        <strain>ATCC BAA-871 / DC3000</strain>
    </source>
</reference>
<dbReference type="EC" id="4.1.1.98" evidence="1"/>
<dbReference type="EMBL" id="AE016853">
    <property type="protein sequence ID" value="AAO58667.1"/>
    <property type="molecule type" value="Genomic_DNA"/>
</dbReference>
<dbReference type="RefSeq" id="NP_794972.1">
    <property type="nucleotide sequence ID" value="NC_004578.1"/>
</dbReference>
<dbReference type="RefSeq" id="WP_005768425.1">
    <property type="nucleotide sequence ID" value="NC_004578.1"/>
</dbReference>
<dbReference type="SMR" id="Q87UQ5"/>
<dbReference type="STRING" id="223283.PSPTO_5241"/>
<dbReference type="DNASU" id="1186926"/>
<dbReference type="GeneID" id="1186926"/>
<dbReference type="KEGG" id="pst:PSPTO_5241"/>
<dbReference type="PATRIC" id="fig|223283.9.peg.5363"/>
<dbReference type="eggNOG" id="COG0043">
    <property type="taxonomic scope" value="Bacteria"/>
</dbReference>
<dbReference type="HOGENOM" id="CLU_023348_4_1_6"/>
<dbReference type="OrthoDB" id="9809841at2"/>
<dbReference type="PhylomeDB" id="Q87UQ5"/>
<dbReference type="UniPathway" id="UPA00232"/>
<dbReference type="Proteomes" id="UP000002515">
    <property type="component" value="Chromosome"/>
</dbReference>
<dbReference type="GO" id="GO:0005829">
    <property type="term" value="C:cytosol"/>
    <property type="evidence" value="ECO:0007669"/>
    <property type="project" value="TreeGrafter"/>
</dbReference>
<dbReference type="GO" id="GO:0005886">
    <property type="term" value="C:plasma membrane"/>
    <property type="evidence" value="ECO:0007669"/>
    <property type="project" value="UniProtKB-SubCell"/>
</dbReference>
<dbReference type="GO" id="GO:0008694">
    <property type="term" value="F:3-octaprenyl-4-hydroxybenzoate carboxy-lyase activity"/>
    <property type="evidence" value="ECO:0007669"/>
    <property type="project" value="UniProtKB-UniRule"/>
</dbReference>
<dbReference type="GO" id="GO:0046872">
    <property type="term" value="F:metal ion binding"/>
    <property type="evidence" value="ECO:0007669"/>
    <property type="project" value="UniProtKB-KW"/>
</dbReference>
<dbReference type="GO" id="GO:0006744">
    <property type="term" value="P:ubiquinone biosynthetic process"/>
    <property type="evidence" value="ECO:0007669"/>
    <property type="project" value="UniProtKB-UniRule"/>
</dbReference>
<dbReference type="FunFam" id="1.20.5.570:FF:000001">
    <property type="entry name" value="3-octaprenyl-4-hydroxybenzoate carboxy-lyase"/>
    <property type="match status" value="1"/>
</dbReference>
<dbReference type="FunFam" id="3.40.1670.10:FF:000001">
    <property type="entry name" value="3-octaprenyl-4-hydroxybenzoate carboxy-lyase"/>
    <property type="match status" value="1"/>
</dbReference>
<dbReference type="Gene3D" id="1.20.5.570">
    <property type="entry name" value="Single helix bin"/>
    <property type="match status" value="1"/>
</dbReference>
<dbReference type="Gene3D" id="3.40.1670.10">
    <property type="entry name" value="UbiD C-terminal domain-like"/>
    <property type="match status" value="1"/>
</dbReference>
<dbReference type="HAMAP" id="MF_01636">
    <property type="entry name" value="UbiD"/>
    <property type="match status" value="1"/>
</dbReference>
<dbReference type="InterPro" id="IPR002830">
    <property type="entry name" value="UbiD"/>
</dbReference>
<dbReference type="InterPro" id="IPR049381">
    <property type="entry name" value="UbiD-like_C"/>
</dbReference>
<dbReference type="InterPro" id="IPR049383">
    <property type="entry name" value="UbiD-like_N"/>
</dbReference>
<dbReference type="InterPro" id="IPR023677">
    <property type="entry name" value="UbiD_bacteria"/>
</dbReference>
<dbReference type="InterPro" id="IPR048304">
    <property type="entry name" value="UbiD_Rift_dom"/>
</dbReference>
<dbReference type="NCBIfam" id="NF008175">
    <property type="entry name" value="PRK10922.1"/>
    <property type="match status" value="1"/>
</dbReference>
<dbReference type="NCBIfam" id="TIGR00148">
    <property type="entry name" value="UbiD family decarboxylase"/>
    <property type="match status" value="1"/>
</dbReference>
<dbReference type="PANTHER" id="PTHR30108">
    <property type="entry name" value="3-OCTAPRENYL-4-HYDROXYBENZOATE CARBOXY-LYASE-RELATED"/>
    <property type="match status" value="1"/>
</dbReference>
<dbReference type="PANTHER" id="PTHR30108:SF17">
    <property type="entry name" value="FERULIC ACID DECARBOXYLASE 1"/>
    <property type="match status" value="1"/>
</dbReference>
<dbReference type="Pfam" id="PF01977">
    <property type="entry name" value="UbiD"/>
    <property type="match status" value="1"/>
</dbReference>
<dbReference type="Pfam" id="PF20696">
    <property type="entry name" value="UbiD_C"/>
    <property type="match status" value="1"/>
</dbReference>
<dbReference type="Pfam" id="PF20695">
    <property type="entry name" value="UbiD_N"/>
    <property type="match status" value="1"/>
</dbReference>
<dbReference type="SUPFAM" id="SSF50475">
    <property type="entry name" value="FMN-binding split barrel"/>
    <property type="match status" value="1"/>
</dbReference>
<dbReference type="SUPFAM" id="SSF143968">
    <property type="entry name" value="UbiD C-terminal domain-like"/>
    <property type="match status" value="1"/>
</dbReference>